<gene>
    <name type="primary">SAM4</name>
    <name type="ordered locus">YPL273W</name>
</gene>
<comment type="function">
    <text evidence="2">Homocysteine S-methyltransferase involved in the conversion of S-adenosylmethionine (AdoMet) to methionine to control the methionine/AdoMet ratio. Also converts S-methylmethionine (SMM) to methionine.</text>
</comment>
<comment type="catalytic activity">
    <reaction>
        <text>S-methyl-L-methionine + L-homocysteine = 2 L-methionine + H(+)</text>
        <dbReference type="Rhea" id="RHEA:26337"/>
        <dbReference type="ChEBI" id="CHEBI:15378"/>
        <dbReference type="ChEBI" id="CHEBI:57844"/>
        <dbReference type="ChEBI" id="CHEBI:58199"/>
        <dbReference type="ChEBI" id="CHEBI:58252"/>
        <dbReference type="EC" id="2.1.1.10"/>
    </reaction>
</comment>
<comment type="cofactor">
    <cofactor evidence="1">
        <name>Zn(2+)</name>
        <dbReference type="ChEBI" id="CHEBI:29105"/>
    </cofactor>
</comment>
<comment type="subcellular location">
    <subcellularLocation>
        <location evidence="3">Cytoplasm</location>
    </subcellularLocation>
    <subcellularLocation>
        <location evidence="3">Nucleus</location>
    </subcellularLocation>
</comment>
<comment type="induction">
    <text evidence="2">Up-regulated in response to high extracellular methionine.</text>
</comment>
<comment type="miscellaneous">
    <text evidence="4">Present with 60300 molecules/cell in log phase SD medium.</text>
</comment>
<sequence>MARLPLKQFLADNPKKVLVLDGGQGTELENRGIKVANPVWSTIPFISESFWSDESSANRKIVKEMFNDFLNAGAEILMTTTYQTSYKSVSENTPIRTLSEYNNLLNRIVDFSRNCIGEDKYLIGCIGPWGAHICREFTGDYGAEPENIDFYQYFKPQLENFNKNDKLDLIGFETIPNIHELKAILSWDESILSRPFYIGLSVHEHGVLRDGTTMEEIAQVIKDLGDKINPNFSFLGINCVSFNQSPDILESLHQALPNMALLAYPNSGEVYDTEKKIWLPNSDKLNSWDTVVKQYISSGARIIGGCCRTSPKDIQEISAAVKKYT</sequence>
<evidence type="ECO:0000255" key="1">
    <source>
        <dbReference type="PROSITE-ProRule" id="PRU00333"/>
    </source>
</evidence>
<evidence type="ECO:0000269" key="2">
    <source>
    </source>
</evidence>
<evidence type="ECO:0000269" key="3">
    <source>
    </source>
</evidence>
<evidence type="ECO:0000269" key="4">
    <source>
    </source>
</evidence>
<evidence type="ECO:0007744" key="5">
    <source>
    </source>
</evidence>
<accession>Q08985</accession>
<accession>D6W397</accession>
<dbReference type="EC" id="2.1.1.10"/>
<dbReference type="EMBL" id="Z73629">
    <property type="protein sequence ID" value="CAA98009.1"/>
    <property type="molecule type" value="Genomic_DNA"/>
</dbReference>
<dbReference type="EMBL" id="BK006949">
    <property type="protein sequence ID" value="DAA11163.1"/>
    <property type="molecule type" value="Genomic_DNA"/>
</dbReference>
<dbReference type="PIR" id="S65306">
    <property type="entry name" value="S65306"/>
</dbReference>
<dbReference type="RefSeq" id="NP_015050.1">
    <property type="nucleotide sequence ID" value="NM_001184087.1"/>
</dbReference>
<dbReference type="SMR" id="Q08985"/>
<dbReference type="BioGRID" id="35940">
    <property type="interactions" value="42"/>
</dbReference>
<dbReference type="FunCoup" id="Q08985">
    <property type="interactions" value="295"/>
</dbReference>
<dbReference type="IntAct" id="Q08985">
    <property type="interactions" value="2"/>
</dbReference>
<dbReference type="STRING" id="4932.YPL273W"/>
<dbReference type="iPTMnet" id="Q08985"/>
<dbReference type="PaxDb" id="4932-YPL273W"/>
<dbReference type="PeptideAtlas" id="Q08985"/>
<dbReference type="DNASU" id="855855"/>
<dbReference type="EnsemblFungi" id="YPL273W_mRNA">
    <property type="protein sequence ID" value="YPL273W"/>
    <property type="gene ID" value="YPL273W"/>
</dbReference>
<dbReference type="GeneID" id="855855"/>
<dbReference type="KEGG" id="sce:YPL273W"/>
<dbReference type="AGR" id="SGD:S000006194"/>
<dbReference type="SGD" id="S000006194">
    <property type="gene designation" value="SAM4"/>
</dbReference>
<dbReference type="VEuPathDB" id="FungiDB:YPL273W"/>
<dbReference type="eggNOG" id="KOG1579">
    <property type="taxonomic scope" value="Eukaryota"/>
</dbReference>
<dbReference type="GeneTree" id="ENSGT00510000049619"/>
<dbReference type="HOGENOM" id="CLU_004914_3_2_1"/>
<dbReference type="InParanoid" id="Q08985"/>
<dbReference type="OMA" id="TECYEAQ"/>
<dbReference type="OrthoDB" id="261426at2759"/>
<dbReference type="BioCyc" id="YEAST:YPL273W-MONOMER"/>
<dbReference type="BioGRID-ORCS" id="855855">
    <property type="hits" value="0 hits in 10 CRISPR screens"/>
</dbReference>
<dbReference type="PRO" id="PR:Q08985"/>
<dbReference type="Proteomes" id="UP000002311">
    <property type="component" value="Chromosome XVI"/>
</dbReference>
<dbReference type="RNAct" id="Q08985">
    <property type="molecule type" value="protein"/>
</dbReference>
<dbReference type="GO" id="GO:0005737">
    <property type="term" value="C:cytoplasm"/>
    <property type="evidence" value="ECO:0007005"/>
    <property type="project" value="SGD"/>
</dbReference>
<dbReference type="GO" id="GO:0005634">
    <property type="term" value="C:nucleus"/>
    <property type="evidence" value="ECO:0007005"/>
    <property type="project" value="SGD"/>
</dbReference>
<dbReference type="GO" id="GO:0046872">
    <property type="term" value="F:metal ion binding"/>
    <property type="evidence" value="ECO:0007669"/>
    <property type="project" value="UniProtKB-KW"/>
</dbReference>
<dbReference type="GO" id="GO:0008898">
    <property type="term" value="F:S-adenosylmethionine-homocysteine S-methyltransferase activity"/>
    <property type="evidence" value="ECO:0000314"/>
    <property type="project" value="SGD"/>
</dbReference>
<dbReference type="GO" id="GO:0061627">
    <property type="term" value="F:S-methylmethionine-homocysteine S-methyltransferase activity"/>
    <property type="evidence" value="ECO:0007669"/>
    <property type="project" value="RHEA"/>
</dbReference>
<dbReference type="GO" id="GO:0050667">
    <property type="term" value="P:homocysteine metabolic process"/>
    <property type="evidence" value="ECO:0000314"/>
    <property type="project" value="SGD"/>
</dbReference>
<dbReference type="GO" id="GO:0019284">
    <property type="term" value="P:L-methionine salvage from S-adenosylmethionine"/>
    <property type="evidence" value="ECO:0000314"/>
    <property type="project" value="SGD"/>
</dbReference>
<dbReference type="GO" id="GO:0032259">
    <property type="term" value="P:methylation"/>
    <property type="evidence" value="ECO:0007669"/>
    <property type="project" value="UniProtKB-KW"/>
</dbReference>
<dbReference type="GO" id="GO:0033353">
    <property type="term" value="P:S-adenosylmethionine cycle"/>
    <property type="evidence" value="ECO:0000314"/>
    <property type="project" value="SGD"/>
</dbReference>
<dbReference type="FunFam" id="3.20.20.330:FF:000005">
    <property type="entry name" value="AdoMet-homocysteine methyltransferase"/>
    <property type="match status" value="1"/>
</dbReference>
<dbReference type="Gene3D" id="3.20.20.330">
    <property type="entry name" value="Homocysteine-binding-like domain"/>
    <property type="match status" value="1"/>
</dbReference>
<dbReference type="InterPro" id="IPR003726">
    <property type="entry name" value="HCY_dom"/>
</dbReference>
<dbReference type="InterPro" id="IPR036589">
    <property type="entry name" value="HCY_dom_sf"/>
</dbReference>
<dbReference type="PANTHER" id="PTHR11103:SF10">
    <property type="entry name" value="HOMOCYSTEINE S-METHYLTRANSFERASE 1-RELATED"/>
    <property type="match status" value="1"/>
</dbReference>
<dbReference type="PANTHER" id="PTHR11103">
    <property type="entry name" value="SLR1189 PROTEIN"/>
    <property type="match status" value="1"/>
</dbReference>
<dbReference type="Pfam" id="PF02574">
    <property type="entry name" value="S-methyl_trans"/>
    <property type="match status" value="1"/>
</dbReference>
<dbReference type="SUPFAM" id="SSF82282">
    <property type="entry name" value="Homocysteine S-methyltransferase"/>
    <property type="match status" value="1"/>
</dbReference>
<dbReference type="PROSITE" id="PS50970">
    <property type="entry name" value="HCY"/>
    <property type="match status" value="1"/>
</dbReference>
<organism>
    <name type="scientific">Saccharomyces cerevisiae (strain ATCC 204508 / S288c)</name>
    <name type="common">Baker's yeast</name>
    <dbReference type="NCBI Taxonomy" id="559292"/>
    <lineage>
        <taxon>Eukaryota</taxon>
        <taxon>Fungi</taxon>
        <taxon>Dikarya</taxon>
        <taxon>Ascomycota</taxon>
        <taxon>Saccharomycotina</taxon>
        <taxon>Saccharomycetes</taxon>
        <taxon>Saccharomycetales</taxon>
        <taxon>Saccharomycetaceae</taxon>
        <taxon>Saccharomyces</taxon>
    </lineage>
</organism>
<name>SAM4_YEAST</name>
<reference key="1">
    <citation type="journal article" date="1997" name="Nature">
        <title>The nucleotide sequence of Saccharomyces cerevisiae chromosome XVI.</title>
        <authorList>
            <person name="Bussey H."/>
            <person name="Storms R.K."/>
            <person name="Ahmed A."/>
            <person name="Albermann K."/>
            <person name="Allen E."/>
            <person name="Ansorge W."/>
            <person name="Araujo R."/>
            <person name="Aparicio A."/>
            <person name="Barrell B.G."/>
            <person name="Badcock K."/>
            <person name="Benes V."/>
            <person name="Botstein D."/>
            <person name="Bowman S."/>
            <person name="Brueckner M."/>
            <person name="Carpenter J."/>
            <person name="Cherry J.M."/>
            <person name="Chung E."/>
            <person name="Churcher C.M."/>
            <person name="Coster F."/>
            <person name="Davis K."/>
            <person name="Davis R.W."/>
            <person name="Dietrich F.S."/>
            <person name="Delius H."/>
            <person name="DiPaolo T."/>
            <person name="Dubois E."/>
            <person name="Duesterhoeft A."/>
            <person name="Duncan M."/>
            <person name="Floeth M."/>
            <person name="Fortin N."/>
            <person name="Friesen J.D."/>
            <person name="Fritz C."/>
            <person name="Goffeau A."/>
            <person name="Hall J."/>
            <person name="Hebling U."/>
            <person name="Heumann K."/>
            <person name="Hilbert H."/>
            <person name="Hillier L.W."/>
            <person name="Hunicke-Smith S."/>
            <person name="Hyman R.W."/>
            <person name="Johnston M."/>
            <person name="Kalman S."/>
            <person name="Kleine K."/>
            <person name="Komp C."/>
            <person name="Kurdi O."/>
            <person name="Lashkari D."/>
            <person name="Lew H."/>
            <person name="Lin A."/>
            <person name="Lin D."/>
            <person name="Louis E.J."/>
            <person name="Marathe R."/>
            <person name="Messenguy F."/>
            <person name="Mewes H.-W."/>
            <person name="Mirtipati S."/>
            <person name="Moestl D."/>
            <person name="Mueller-Auer S."/>
            <person name="Namath A."/>
            <person name="Nentwich U."/>
            <person name="Oefner P."/>
            <person name="Pearson D."/>
            <person name="Petel F.X."/>
            <person name="Pohl T.M."/>
            <person name="Purnelle B."/>
            <person name="Rajandream M.A."/>
            <person name="Rechmann S."/>
            <person name="Rieger M."/>
            <person name="Riles L."/>
            <person name="Roberts D."/>
            <person name="Schaefer M."/>
            <person name="Scharfe M."/>
            <person name="Scherens B."/>
            <person name="Schramm S."/>
            <person name="Schroeder M."/>
            <person name="Sdicu A.-M."/>
            <person name="Tettelin H."/>
            <person name="Urrestarazu L.A."/>
            <person name="Ushinsky S."/>
            <person name="Vierendeels F."/>
            <person name="Vissers S."/>
            <person name="Voss H."/>
            <person name="Walsh S.V."/>
            <person name="Wambutt R."/>
            <person name="Wang Y."/>
            <person name="Wedler E."/>
            <person name="Wedler H."/>
            <person name="Winnett E."/>
            <person name="Zhong W.-W."/>
            <person name="Zollner A."/>
            <person name="Vo D.H."/>
            <person name="Hani J."/>
        </authorList>
    </citation>
    <scope>NUCLEOTIDE SEQUENCE [LARGE SCALE GENOMIC DNA]</scope>
    <source>
        <strain>ATCC 204508 / S288c</strain>
    </source>
</reference>
<reference key="2">
    <citation type="journal article" date="2014" name="G3 (Bethesda)">
        <title>The reference genome sequence of Saccharomyces cerevisiae: Then and now.</title>
        <authorList>
            <person name="Engel S.R."/>
            <person name="Dietrich F.S."/>
            <person name="Fisk D.G."/>
            <person name="Binkley G."/>
            <person name="Balakrishnan R."/>
            <person name="Costanzo M.C."/>
            <person name="Dwight S.S."/>
            <person name="Hitz B.C."/>
            <person name="Karra K."/>
            <person name="Nash R.S."/>
            <person name="Weng S."/>
            <person name="Wong E.D."/>
            <person name="Lloyd P."/>
            <person name="Skrzypek M.S."/>
            <person name="Miyasato S.R."/>
            <person name="Simison M."/>
            <person name="Cherry J.M."/>
        </authorList>
    </citation>
    <scope>GENOME REANNOTATION</scope>
    <source>
        <strain>ATCC 204508 / S288c</strain>
    </source>
</reference>
<reference key="3">
    <citation type="journal article" date="2000" name="J. Biol. Chem.">
        <title>Reverse methionine biosynthesis from S-adenosylmethionine in eukaryotic cells.</title>
        <authorList>
            <person name="Thomas D."/>
            <person name="Becker A."/>
            <person name="Surdin-Kerjan Y."/>
        </authorList>
    </citation>
    <scope>FUNCTION</scope>
    <scope>INDUCTION</scope>
</reference>
<reference key="4">
    <citation type="journal article" date="2003" name="Nature">
        <title>Global analysis of protein localization in budding yeast.</title>
        <authorList>
            <person name="Huh W.-K."/>
            <person name="Falvo J.V."/>
            <person name="Gerke L.C."/>
            <person name="Carroll A.S."/>
            <person name="Howson R.W."/>
            <person name="Weissman J.S."/>
            <person name="O'Shea E.K."/>
        </authorList>
    </citation>
    <scope>SUBCELLULAR LOCATION [LARGE SCALE ANALYSIS]</scope>
</reference>
<reference key="5">
    <citation type="journal article" date="2003" name="Nature">
        <title>Global analysis of protein expression in yeast.</title>
        <authorList>
            <person name="Ghaemmaghami S."/>
            <person name="Huh W.-K."/>
            <person name="Bower K."/>
            <person name="Howson R.W."/>
            <person name="Belle A."/>
            <person name="Dephoure N."/>
            <person name="O'Shea E.K."/>
            <person name="Weissman J.S."/>
        </authorList>
    </citation>
    <scope>LEVEL OF PROTEIN EXPRESSION [LARGE SCALE ANALYSIS]</scope>
</reference>
<reference key="6">
    <citation type="journal article" date="2008" name="Mol. Cell. Proteomics">
        <title>A multidimensional chromatography technology for in-depth phosphoproteome analysis.</title>
        <authorList>
            <person name="Albuquerque C.P."/>
            <person name="Smolka M.B."/>
            <person name="Payne S.H."/>
            <person name="Bafna V."/>
            <person name="Eng J."/>
            <person name="Zhou H."/>
        </authorList>
    </citation>
    <scope>PHOSPHORYLATION [LARGE SCALE ANALYSIS] AT THR-138</scope>
    <scope>IDENTIFICATION BY MASS SPECTROMETRY [LARGE SCALE ANALYSIS]</scope>
</reference>
<keyword id="KW-0028">Amino-acid biosynthesis</keyword>
<keyword id="KW-0963">Cytoplasm</keyword>
<keyword id="KW-0479">Metal-binding</keyword>
<keyword id="KW-0486">Methionine biosynthesis</keyword>
<keyword id="KW-0489">Methyltransferase</keyword>
<keyword id="KW-0539">Nucleus</keyword>
<keyword id="KW-0597">Phosphoprotein</keyword>
<keyword id="KW-1185">Reference proteome</keyword>
<keyword id="KW-0949">S-adenosyl-L-methionine</keyword>
<keyword id="KW-0808">Transferase</keyword>
<keyword id="KW-0862">Zinc</keyword>
<proteinExistence type="evidence at protein level"/>
<protein>
    <recommendedName>
        <fullName>Homocysteine S-methyltransferase 2</fullName>
        <ecNumber>2.1.1.10</ecNumber>
    </recommendedName>
    <alternativeName>
        <fullName>S-adenosylmethionine metabolism protein 4</fullName>
    </alternativeName>
    <alternativeName>
        <fullName>S-methylmethionine:homocysteine methyltransferase 2</fullName>
        <shortName>SMM:Hcy S-methyltransferase 2</shortName>
    </alternativeName>
</protein>
<feature type="chain" id="PRO_0000114619" description="Homocysteine S-methyltransferase 2">
    <location>
        <begin position="1"/>
        <end position="325"/>
    </location>
</feature>
<feature type="domain" description="Hcy-binding" evidence="1">
    <location>
        <begin position="6"/>
        <end position="321"/>
    </location>
</feature>
<feature type="binding site" evidence="1">
    <location>
        <position position="239"/>
    </location>
    <ligand>
        <name>Zn(2+)</name>
        <dbReference type="ChEBI" id="CHEBI:29105"/>
    </ligand>
</feature>
<feature type="binding site" evidence="1">
    <location>
        <position position="306"/>
    </location>
    <ligand>
        <name>Zn(2+)</name>
        <dbReference type="ChEBI" id="CHEBI:29105"/>
    </ligand>
</feature>
<feature type="binding site" evidence="1">
    <location>
        <position position="307"/>
    </location>
    <ligand>
        <name>Zn(2+)</name>
        <dbReference type="ChEBI" id="CHEBI:29105"/>
    </ligand>
</feature>
<feature type="modified residue" description="Phosphothreonine" evidence="5">
    <location>
        <position position="138"/>
    </location>
</feature>